<proteinExistence type="inferred from homology"/>
<gene>
    <name evidence="1" type="primary">rpsO</name>
    <name type="ordered locus">Cthe_0417</name>
</gene>
<reference key="1">
    <citation type="submission" date="2007-02" db="EMBL/GenBank/DDBJ databases">
        <title>Complete sequence of Clostridium thermocellum ATCC 27405.</title>
        <authorList>
            <consortium name="US DOE Joint Genome Institute"/>
            <person name="Copeland A."/>
            <person name="Lucas S."/>
            <person name="Lapidus A."/>
            <person name="Barry K."/>
            <person name="Detter J.C."/>
            <person name="Glavina del Rio T."/>
            <person name="Hammon N."/>
            <person name="Israni S."/>
            <person name="Dalin E."/>
            <person name="Tice H."/>
            <person name="Pitluck S."/>
            <person name="Chertkov O."/>
            <person name="Brettin T."/>
            <person name="Bruce D."/>
            <person name="Han C."/>
            <person name="Tapia R."/>
            <person name="Gilna P."/>
            <person name="Schmutz J."/>
            <person name="Larimer F."/>
            <person name="Land M."/>
            <person name="Hauser L."/>
            <person name="Kyrpides N."/>
            <person name="Mikhailova N."/>
            <person name="Wu J.H.D."/>
            <person name="Newcomb M."/>
            <person name="Richardson P."/>
        </authorList>
    </citation>
    <scope>NUCLEOTIDE SEQUENCE [LARGE SCALE GENOMIC DNA]</scope>
    <source>
        <strain>ATCC 27405 / DSM 1237 / JCM 9322 / NBRC 103400 / NCIMB 10682 / NRRL B-4536 / VPI 7372</strain>
    </source>
</reference>
<keyword id="KW-1185">Reference proteome</keyword>
<keyword id="KW-0687">Ribonucleoprotein</keyword>
<keyword id="KW-0689">Ribosomal protein</keyword>
<keyword id="KW-0694">RNA-binding</keyword>
<keyword id="KW-0699">rRNA-binding</keyword>
<feature type="chain" id="PRO_0000354194" description="Small ribosomal subunit protein uS15">
    <location>
        <begin position="1"/>
        <end position="87"/>
    </location>
</feature>
<dbReference type="EMBL" id="CP000568">
    <property type="protein sequence ID" value="ABN51655.1"/>
    <property type="molecule type" value="Genomic_DNA"/>
</dbReference>
<dbReference type="RefSeq" id="WP_003519031.1">
    <property type="nucleotide sequence ID" value="NC_009012.1"/>
</dbReference>
<dbReference type="SMR" id="A3DCH6"/>
<dbReference type="STRING" id="203119.Cthe_0417"/>
<dbReference type="GeneID" id="35802981"/>
<dbReference type="KEGG" id="cth:Cthe_0417"/>
<dbReference type="eggNOG" id="COG0184">
    <property type="taxonomic scope" value="Bacteria"/>
</dbReference>
<dbReference type="HOGENOM" id="CLU_148518_0_0_9"/>
<dbReference type="OrthoDB" id="9799262at2"/>
<dbReference type="Proteomes" id="UP000002145">
    <property type="component" value="Chromosome"/>
</dbReference>
<dbReference type="GO" id="GO:0022627">
    <property type="term" value="C:cytosolic small ribosomal subunit"/>
    <property type="evidence" value="ECO:0007669"/>
    <property type="project" value="TreeGrafter"/>
</dbReference>
<dbReference type="GO" id="GO:0019843">
    <property type="term" value="F:rRNA binding"/>
    <property type="evidence" value="ECO:0007669"/>
    <property type="project" value="UniProtKB-UniRule"/>
</dbReference>
<dbReference type="GO" id="GO:0003735">
    <property type="term" value="F:structural constituent of ribosome"/>
    <property type="evidence" value="ECO:0007669"/>
    <property type="project" value="InterPro"/>
</dbReference>
<dbReference type="GO" id="GO:0006412">
    <property type="term" value="P:translation"/>
    <property type="evidence" value="ECO:0007669"/>
    <property type="project" value="UniProtKB-UniRule"/>
</dbReference>
<dbReference type="CDD" id="cd00353">
    <property type="entry name" value="Ribosomal_S15p_S13e"/>
    <property type="match status" value="1"/>
</dbReference>
<dbReference type="FunFam" id="1.10.287.10:FF:000002">
    <property type="entry name" value="30S ribosomal protein S15"/>
    <property type="match status" value="1"/>
</dbReference>
<dbReference type="Gene3D" id="6.10.250.3130">
    <property type="match status" value="1"/>
</dbReference>
<dbReference type="Gene3D" id="1.10.287.10">
    <property type="entry name" value="S15/NS1, RNA-binding"/>
    <property type="match status" value="1"/>
</dbReference>
<dbReference type="HAMAP" id="MF_01343_B">
    <property type="entry name" value="Ribosomal_uS15_B"/>
    <property type="match status" value="1"/>
</dbReference>
<dbReference type="InterPro" id="IPR000589">
    <property type="entry name" value="Ribosomal_uS15"/>
</dbReference>
<dbReference type="InterPro" id="IPR005290">
    <property type="entry name" value="Ribosomal_uS15_bac-type"/>
</dbReference>
<dbReference type="InterPro" id="IPR009068">
    <property type="entry name" value="uS15_NS1_RNA-bd_sf"/>
</dbReference>
<dbReference type="NCBIfam" id="TIGR00952">
    <property type="entry name" value="S15_bact"/>
    <property type="match status" value="1"/>
</dbReference>
<dbReference type="PANTHER" id="PTHR23321">
    <property type="entry name" value="RIBOSOMAL PROTEIN S15, BACTERIAL AND ORGANELLAR"/>
    <property type="match status" value="1"/>
</dbReference>
<dbReference type="PANTHER" id="PTHR23321:SF26">
    <property type="entry name" value="SMALL RIBOSOMAL SUBUNIT PROTEIN US15M"/>
    <property type="match status" value="1"/>
</dbReference>
<dbReference type="Pfam" id="PF00312">
    <property type="entry name" value="Ribosomal_S15"/>
    <property type="match status" value="1"/>
</dbReference>
<dbReference type="SMART" id="SM01387">
    <property type="entry name" value="Ribosomal_S15"/>
    <property type="match status" value="1"/>
</dbReference>
<dbReference type="SUPFAM" id="SSF47060">
    <property type="entry name" value="S15/NS1 RNA-binding domain"/>
    <property type="match status" value="1"/>
</dbReference>
<dbReference type="PROSITE" id="PS00362">
    <property type="entry name" value="RIBOSOMAL_S15"/>
    <property type="match status" value="1"/>
</dbReference>
<name>RS15_ACET2</name>
<organism>
    <name type="scientific">Acetivibrio thermocellus (strain ATCC 27405 / DSM 1237 / JCM 9322 / NBRC 103400 / NCIMB 10682 / NRRL B-4536 / VPI 7372)</name>
    <name type="common">Clostridium thermocellum</name>
    <dbReference type="NCBI Taxonomy" id="203119"/>
    <lineage>
        <taxon>Bacteria</taxon>
        <taxon>Bacillati</taxon>
        <taxon>Bacillota</taxon>
        <taxon>Clostridia</taxon>
        <taxon>Eubacteriales</taxon>
        <taxon>Oscillospiraceae</taxon>
        <taxon>Acetivibrio</taxon>
    </lineage>
</organism>
<protein>
    <recommendedName>
        <fullName evidence="1">Small ribosomal subunit protein uS15</fullName>
    </recommendedName>
    <alternativeName>
        <fullName evidence="2">30S ribosomal protein S15</fullName>
    </alternativeName>
</protein>
<evidence type="ECO:0000255" key="1">
    <source>
        <dbReference type="HAMAP-Rule" id="MF_01343"/>
    </source>
</evidence>
<evidence type="ECO:0000305" key="2"/>
<comment type="function">
    <text evidence="1">One of the primary rRNA binding proteins, it binds directly to 16S rRNA where it helps nucleate assembly of the platform of the 30S subunit by binding and bridging several RNA helices of the 16S rRNA.</text>
</comment>
<comment type="function">
    <text evidence="1">Forms an intersubunit bridge (bridge B4) with the 23S rRNA of the 50S subunit in the ribosome.</text>
</comment>
<comment type="subunit">
    <text evidence="1">Part of the 30S ribosomal subunit. Forms a bridge to the 50S subunit in the 70S ribosome, contacting the 23S rRNA.</text>
</comment>
<comment type="similarity">
    <text evidence="1">Belongs to the universal ribosomal protein uS15 family.</text>
</comment>
<accession>A3DCH6</accession>
<sequence>MQKELKQEIINKFKLHETDTGSPEVQIALLTERINHLTEHLKVHKKDYHSRRGLLKMVGHRRGLLNYLMKTDIARYRAIVEKLNLRK</sequence>